<organism>
    <name type="scientific">Arabidopsis thaliana</name>
    <name type="common">Mouse-ear cress</name>
    <dbReference type="NCBI Taxonomy" id="3702"/>
    <lineage>
        <taxon>Eukaryota</taxon>
        <taxon>Viridiplantae</taxon>
        <taxon>Streptophyta</taxon>
        <taxon>Embryophyta</taxon>
        <taxon>Tracheophyta</taxon>
        <taxon>Spermatophyta</taxon>
        <taxon>Magnoliopsida</taxon>
        <taxon>eudicotyledons</taxon>
        <taxon>Gunneridae</taxon>
        <taxon>Pentapetalae</taxon>
        <taxon>rosids</taxon>
        <taxon>malvids</taxon>
        <taxon>Brassicales</taxon>
        <taxon>Brassicaceae</taxon>
        <taxon>Camelineae</taxon>
        <taxon>Arabidopsis</taxon>
    </lineage>
</organism>
<proteinExistence type="evidence at protein level"/>
<keyword id="KW-0007">Acetylation</keyword>
<keyword id="KW-1003">Cell membrane</keyword>
<keyword id="KW-0472">Membrane</keyword>
<keyword id="KW-1185">Reference proteome</keyword>
<keyword id="KW-0812">Transmembrane</keyword>
<keyword id="KW-1133">Transmembrane helix</keyword>
<accession>Q9SQU2</accession>
<comment type="subunit">
    <text evidence="1">Homodimer and heterodimers.</text>
</comment>
<comment type="subcellular location">
    <subcellularLocation>
        <location evidence="4">Cell membrane</location>
        <topology evidence="4">Multi-pass membrane protein</topology>
    </subcellularLocation>
</comment>
<comment type="tissue specificity">
    <text evidence="4">Expressed in the root endodermis and flowers.</text>
</comment>
<comment type="developmental stage">
    <text evidence="4">Accumulates exclusively in the root endodermis at a late developmental stage. Strongly expressed in endodermal cells overlaying lateral root primordia and later in a collar of endodermal cells at the base of the emerged lateral root. Also expressed in the floral organ abscission zone in cells that detach along with the shed organs.</text>
</comment>
<comment type="similarity">
    <text evidence="5">Belongs to the Casparian strip membrane proteins (CASP) family.</text>
</comment>
<feature type="initiator methionine" description="Removed" evidence="6">
    <location>
        <position position="1"/>
    </location>
</feature>
<feature type="chain" id="PRO_0000308665" description="CASP-like protein 1D2">
    <location>
        <begin position="2"/>
        <end position="199"/>
    </location>
</feature>
<feature type="topological domain" description="Cytoplasmic" evidence="2">
    <location>
        <begin position="2"/>
        <end position="36"/>
    </location>
</feature>
<feature type="transmembrane region" description="Helical" evidence="2">
    <location>
        <begin position="37"/>
        <end position="57"/>
    </location>
</feature>
<feature type="topological domain" description="Extracellular" evidence="2">
    <location>
        <begin position="58"/>
        <end position="85"/>
    </location>
</feature>
<feature type="transmembrane region" description="Helical" evidence="2">
    <location>
        <begin position="86"/>
        <end position="106"/>
    </location>
</feature>
<feature type="topological domain" description="Cytoplasmic" evidence="2">
    <location>
        <begin position="107"/>
        <end position="129"/>
    </location>
</feature>
<feature type="transmembrane region" description="Helical" evidence="2">
    <location>
        <begin position="130"/>
        <end position="150"/>
    </location>
</feature>
<feature type="topological domain" description="Extracellular" evidence="2">
    <location>
        <begin position="151"/>
        <end position="171"/>
    </location>
</feature>
<feature type="transmembrane region" description="Helical" evidence="2">
    <location>
        <begin position="172"/>
        <end position="192"/>
    </location>
</feature>
<feature type="topological domain" description="Cytoplasmic" evidence="2">
    <location>
        <begin position="193"/>
        <end position="199"/>
    </location>
</feature>
<feature type="region of interest" description="Disordered" evidence="3">
    <location>
        <begin position="1"/>
        <end position="27"/>
    </location>
</feature>
<feature type="modified residue" description="N-acetylalanine" evidence="6">
    <location>
        <position position="2"/>
    </location>
</feature>
<sequence>MASTENPDPETGKSEPIPASATPPPSSAASFLDCRKIDIITRVLLFSATLTALIVMVTSDQTEMTQLPGVSSPAPVSAEFNDSPAFIYFVVALVVASFYALISTLVSISLLLKPEFTAQFSIYLASLDMVMLGILASATGTAGGVAYIALKGNEEVGWNKICNVYDKFCRYIATSLALSLFASLLLLVLSIWSALSKRT</sequence>
<gene>
    <name type="ordered locus">At3g06390</name>
    <name type="ORF">F24P17.14</name>
</gene>
<reference key="1">
    <citation type="journal article" date="2000" name="Nature">
        <title>Sequence and analysis of chromosome 3 of the plant Arabidopsis thaliana.</title>
        <authorList>
            <person name="Salanoubat M."/>
            <person name="Lemcke K."/>
            <person name="Rieger M."/>
            <person name="Ansorge W."/>
            <person name="Unseld M."/>
            <person name="Fartmann B."/>
            <person name="Valle G."/>
            <person name="Bloecker H."/>
            <person name="Perez-Alonso M."/>
            <person name="Obermaier B."/>
            <person name="Delseny M."/>
            <person name="Boutry M."/>
            <person name="Grivell L.A."/>
            <person name="Mache R."/>
            <person name="Puigdomenech P."/>
            <person name="De Simone V."/>
            <person name="Choisne N."/>
            <person name="Artiguenave F."/>
            <person name="Robert C."/>
            <person name="Brottier P."/>
            <person name="Wincker P."/>
            <person name="Cattolico L."/>
            <person name="Weissenbach J."/>
            <person name="Saurin W."/>
            <person name="Quetier F."/>
            <person name="Schaefer M."/>
            <person name="Mueller-Auer S."/>
            <person name="Gabel C."/>
            <person name="Fuchs M."/>
            <person name="Benes V."/>
            <person name="Wurmbach E."/>
            <person name="Drzonek H."/>
            <person name="Erfle H."/>
            <person name="Jordan N."/>
            <person name="Bangert S."/>
            <person name="Wiedelmann R."/>
            <person name="Kranz H."/>
            <person name="Voss H."/>
            <person name="Holland R."/>
            <person name="Brandt P."/>
            <person name="Nyakatura G."/>
            <person name="Vezzi A."/>
            <person name="D'Angelo M."/>
            <person name="Pallavicini A."/>
            <person name="Toppo S."/>
            <person name="Simionati B."/>
            <person name="Conrad A."/>
            <person name="Hornischer K."/>
            <person name="Kauer G."/>
            <person name="Loehnert T.-H."/>
            <person name="Nordsiek G."/>
            <person name="Reichelt J."/>
            <person name="Scharfe M."/>
            <person name="Schoen O."/>
            <person name="Bargues M."/>
            <person name="Terol J."/>
            <person name="Climent J."/>
            <person name="Navarro P."/>
            <person name="Collado C."/>
            <person name="Perez-Perez A."/>
            <person name="Ottenwaelder B."/>
            <person name="Duchemin D."/>
            <person name="Cooke R."/>
            <person name="Laudie M."/>
            <person name="Berger-Llauro C."/>
            <person name="Purnelle B."/>
            <person name="Masuy D."/>
            <person name="de Haan M."/>
            <person name="Maarse A.C."/>
            <person name="Alcaraz J.-P."/>
            <person name="Cottet A."/>
            <person name="Casacuberta E."/>
            <person name="Monfort A."/>
            <person name="Argiriou A."/>
            <person name="Flores M."/>
            <person name="Liguori R."/>
            <person name="Vitale D."/>
            <person name="Mannhaupt G."/>
            <person name="Haase D."/>
            <person name="Schoof H."/>
            <person name="Rudd S."/>
            <person name="Zaccaria P."/>
            <person name="Mewes H.-W."/>
            <person name="Mayer K.F.X."/>
            <person name="Kaul S."/>
            <person name="Town C.D."/>
            <person name="Koo H.L."/>
            <person name="Tallon L.J."/>
            <person name="Jenkins J."/>
            <person name="Rooney T."/>
            <person name="Rizzo M."/>
            <person name="Walts A."/>
            <person name="Utterback T."/>
            <person name="Fujii C.Y."/>
            <person name="Shea T.P."/>
            <person name="Creasy T.H."/>
            <person name="Haas B."/>
            <person name="Maiti R."/>
            <person name="Wu D."/>
            <person name="Peterson J."/>
            <person name="Van Aken S."/>
            <person name="Pai G."/>
            <person name="Militscher J."/>
            <person name="Sellers P."/>
            <person name="Gill J.E."/>
            <person name="Feldblyum T.V."/>
            <person name="Preuss D."/>
            <person name="Lin X."/>
            <person name="Nierman W.C."/>
            <person name="Salzberg S.L."/>
            <person name="White O."/>
            <person name="Venter J.C."/>
            <person name="Fraser C.M."/>
            <person name="Kaneko T."/>
            <person name="Nakamura Y."/>
            <person name="Sato S."/>
            <person name="Kato T."/>
            <person name="Asamizu E."/>
            <person name="Sasamoto S."/>
            <person name="Kimura T."/>
            <person name="Idesawa K."/>
            <person name="Kawashima K."/>
            <person name="Kishida Y."/>
            <person name="Kiyokawa C."/>
            <person name="Kohara M."/>
            <person name="Matsumoto M."/>
            <person name="Matsuno A."/>
            <person name="Muraki A."/>
            <person name="Nakayama S."/>
            <person name="Nakazaki N."/>
            <person name="Shinpo S."/>
            <person name="Takeuchi C."/>
            <person name="Wada T."/>
            <person name="Watanabe A."/>
            <person name="Yamada M."/>
            <person name="Yasuda M."/>
            <person name="Tabata S."/>
        </authorList>
    </citation>
    <scope>NUCLEOTIDE SEQUENCE [LARGE SCALE GENOMIC DNA]</scope>
    <source>
        <strain>cv. Columbia</strain>
    </source>
</reference>
<reference key="2">
    <citation type="journal article" date="2017" name="Plant J.">
        <title>Araport11: a complete reannotation of the Arabidopsis thaliana reference genome.</title>
        <authorList>
            <person name="Cheng C.Y."/>
            <person name="Krishnakumar V."/>
            <person name="Chan A.P."/>
            <person name="Thibaud-Nissen F."/>
            <person name="Schobel S."/>
            <person name="Town C.D."/>
        </authorList>
    </citation>
    <scope>GENOME REANNOTATION</scope>
    <source>
        <strain>cv. Columbia</strain>
    </source>
</reference>
<reference key="3">
    <citation type="journal article" date="2003" name="Science">
        <title>Empirical analysis of transcriptional activity in the Arabidopsis genome.</title>
        <authorList>
            <person name="Yamada K."/>
            <person name="Lim J."/>
            <person name="Dale J.M."/>
            <person name="Chen H."/>
            <person name="Shinn P."/>
            <person name="Palm C.J."/>
            <person name="Southwick A.M."/>
            <person name="Wu H.C."/>
            <person name="Kim C.J."/>
            <person name="Nguyen M."/>
            <person name="Pham P.K."/>
            <person name="Cheuk R.F."/>
            <person name="Karlin-Newmann G."/>
            <person name="Liu S.X."/>
            <person name="Lam B."/>
            <person name="Sakano H."/>
            <person name="Wu T."/>
            <person name="Yu G."/>
            <person name="Miranda M."/>
            <person name="Quach H.L."/>
            <person name="Tripp M."/>
            <person name="Chang C.H."/>
            <person name="Lee J.M."/>
            <person name="Toriumi M.J."/>
            <person name="Chan M.M."/>
            <person name="Tang C.C."/>
            <person name="Onodera C.S."/>
            <person name="Deng J.M."/>
            <person name="Akiyama K."/>
            <person name="Ansari Y."/>
            <person name="Arakawa T."/>
            <person name="Banh J."/>
            <person name="Banno F."/>
            <person name="Bowser L."/>
            <person name="Brooks S.Y."/>
            <person name="Carninci P."/>
            <person name="Chao Q."/>
            <person name="Choy N."/>
            <person name="Enju A."/>
            <person name="Goldsmith A.D."/>
            <person name="Gurjal M."/>
            <person name="Hansen N.F."/>
            <person name="Hayashizaki Y."/>
            <person name="Johnson-Hopson C."/>
            <person name="Hsuan V.W."/>
            <person name="Iida K."/>
            <person name="Karnes M."/>
            <person name="Khan S."/>
            <person name="Koesema E."/>
            <person name="Ishida J."/>
            <person name="Jiang P.X."/>
            <person name="Jones T."/>
            <person name="Kawai J."/>
            <person name="Kamiya A."/>
            <person name="Meyers C."/>
            <person name="Nakajima M."/>
            <person name="Narusaka M."/>
            <person name="Seki M."/>
            <person name="Sakurai T."/>
            <person name="Satou M."/>
            <person name="Tamse R."/>
            <person name="Vaysberg M."/>
            <person name="Wallender E.K."/>
            <person name="Wong C."/>
            <person name="Yamamura Y."/>
            <person name="Yuan S."/>
            <person name="Shinozaki K."/>
            <person name="Davis R.W."/>
            <person name="Theologis A."/>
            <person name="Ecker J.R."/>
        </authorList>
    </citation>
    <scope>NUCLEOTIDE SEQUENCE [LARGE SCALE MRNA]</scope>
    <source>
        <strain>cv. Columbia</strain>
    </source>
</reference>
<reference key="4">
    <citation type="journal article" date="2012" name="Mol. Cell. Proteomics">
        <title>Comparative large-scale characterisation of plant vs. mammal proteins reveals similar and idiosyncratic N-alpha acetylation features.</title>
        <authorList>
            <person name="Bienvenut W.V."/>
            <person name="Sumpton D."/>
            <person name="Martinez A."/>
            <person name="Lilla S."/>
            <person name="Espagne C."/>
            <person name="Meinnel T."/>
            <person name="Giglione C."/>
        </authorList>
    </citation>
    <scope>ACETYLATION [LARGE SCALE ANALYSIS] AT ALA-2</scope>
    <scope>CLEAVAGE OF INITIATOR METHIONINE [LARGE SCALE ANALYSIS]</scope>
    <scope>IDENTIFICATION BY MASS SPECTROMETRY [LARGE SCALE ANALYSIS]</scope>
</reference>
<reference key="5">
    <citation type="journal article" date="2014" name="Plant Physiol.">
        <title>Functional and evolutionary analysis of the CASPARIAN STRIP MEMBRANE DOMAIN PROTEIN family.</title>
        <authorList>
            <person name="Roppolo D."/>
            <person name="Boeckmann B."/>
            <person name="Pfister A."/>
            <person name="Boutet E."/>
            <person name="Rubio M.C."/>
            <person name="Denervaud-Tendon V."/>
            <person name="Vermeer J.E."/>
            <person name="Gheyselinck J."/>
            <person name="Xenarios I."/>
            <person name="Geldner N."/>
        </authorList>
    </citation>
    <scope>TISSUE SPECIFICITY</scope>
    <scope>DEVELOPMENTAL STAGE</scope>
    <scope>SUBCELLULAR LOCATION</scope>
    <scope>GENE FAMILY</scope>
    <scope>NOMENCLATURE</scope>
</reference>
<dbReference type="EMBL" id="AC011623">
    <property type="protein sequence ID" value="AAF08575.1"/>
    <property type="molecule type" value="Genomic_DNA"/>
</dbReference>
<dbReference type="EMBL" id="CP002686">
    <property type="protein sequence ID" value="AEE74385.1"/>
    <property type="molecule type" value="Genomic_DNA"/>
</dbReference>
<dbReference type="EMBL" id="BT003953">
    <property type="protein sequence ID" value="AAO41998.1"/>
    <property type="molecule type" value="mRNA"/>
</dbReference>
<dbReference type="EMBL" id="BT005725">
    <property type="protein sequence ID" value="AAO64140.1"/>
    <property type="molecule type" value="mRNA"/>
</dbReference>
<dbReference type="RefSeq" id="NP_187290.1">
    <property type="nucleotide sequence ID" value="NM_111514.3"/>
</dbReference>
<dbReference type="SMR" id="Q9SQU2"/>
<dbReference type="BioGRID" id="5148">
    <property type="interactions" value="3"/>
</dbReference>
<dbReference type="FunCoup" id="Q9SQU2">
    <property type="interactions" value="163"/>
</dbReference>
<dbReference type="STRING" id="3702.Q9SQU2"/>
<dbReference type="TCDB" id="9.B.56.1.5">
    <property type="family name" value="the bacterial disease resistance and oomycete disease susceptibility protein, pimp1 (pimp1) family"/>
</dbReference>
<dbReference type="GlyGen" id="Q9SQU2">
    <property type="glycosylation" value="1 site"/>
</dbReference>
<dbReference type="iPTMnet" id="Q9SQU2"/>
<dbReference type="PaxDb" id="3702-AT3G06390.1"/>
<dbReference type="ProteomicsDB" id="224435"/>
<dbReference type="EnsemblPlants" id="AT3G06390.1">
    <property type="protein sequence ID" value="AT3G06390.1"/>
    <property type="gene ID" value="AT3G06390"/>
</dbReference>
<dbReference type="GeneID" id="819813"/>
<dbReference type="Gramene" id="AT3G06390.1">
    <property type="protein sequence ID" value="AT3G06390.1"/>
    <property type="gene ID" value="AT3G06390"/>
</dbReference>
<dbReference type="KEGG" id="ath:AT3G06390"/>
<dbReference type="Araport" id="AT3G06390"/>
<dbReference type="TAIR" id="AT3G06390">
    <property type="gene designation" value="CASPL1D2"/>
</dbReference>
<dbReference type="eggNOG" id="ENOG502S2UF">
    <property type="taxonomic scope" value="Eukaryota"/>
</dbReference>
<dbReference type="HOGENOM" id="CLU_066104_1_2_1"/>
<dbReference type="InParanoid" id="Q9SQU2"/>
<dbReference type="OMA" id="FTIHSRV"/>
<dbReference type="PhylomeDB" id="Q9SQU2"/>
<dbReference type="PRO" id="PR:Q9SQU2"/>
<dbReference type="Proteomes" id="UP000006548">
    <property type="component" value="Chromosome 3"/>
</dbReference>
<dbReference type="ExpressionAtlas" id="Q9SQU2">
    <property type="expression patterns" value="baseline and differential"/>
</dbReference>
<dbReference type="GO" id="GO:0005886">
    <property type="term" value="C:plasma membrane"/>
    <property type="evidence" value="ECO:0000314"/>
    <property type="project" value="UniProtKB"/>
</dbReference>
<dbReference type="InterPro" id="IPR006459">
    <property type="entry name" value="CASP/CASPL"/>
</dbReference>
<dbReference type="InterPro" id="IPR006702">
    <property type="entry name" value="CASP_dom"/>
</dbReference>
<dbReference type="InterPro" id="IPR044173">
    <property type="entry name" value="CASPL"/>
</dbReference>
<dbReference type="NCBIfam" id="TIGR01569">
    <property type="entry name" value="A_tha_TIGR01569"/>
    <property type="match status" value="1"/>
</dbReference>
<dbReference type="PANTHER" id="PTHR36488">
    <property type="entry name" value="CASP-LIKE PROTEIN 1U1"/>
    <property type="match status" value="1"/>
</dbReference>
<dbReference type="PANTHER" id="PTHR36488:SF8">
    <property type="entry name" value="CASP-LIKE PROTEIN 1U1"/>
    <property type="match status" value="1"/>
</dbReference>
<dbReference type="Pfam" id="PF04535">
    <property type="entry name" value="CASP_dom"/>
    <property type="match status" value="1"/>
</dbReference>
<evidence type="ECO:0000250" key="1"/>
<evidence type="ECO:0000255" key="2"/>
<evidence type="ECO:0000256" key="3">
    <source>
        <dbReference type="SAM" id="MobiDB-lite"/>
    </source>
</evidence>
<evidence type="ECO:0000269" key="4">
    <source>
    </source>
</evidence>
<evidence type="ECO:0000305" key="5"/>
<evidence type="ECO:0007744" key="6">
    <source>
    </source>
</evidence>
<protein>
    <recommendedName>
        <fullName>CASP-like protein 1D2</fullName>
        <shortName>AtCASPL1D2</shortName>
    </recommendedName>
</protein>
<name>CSPLD_ARATH</name>